<evidence type="ECO:0000255" key="1">
    <source>
        <dbReference type="HAMAP-Rule" id="MF_00409"/>
    </source>
</evidence>
<keyword id="KW-0067">ATP-binding</keyword>
<keyword id="KW-0418">Kinase</keyword>
<keyword id="KW-0441">Lipid A biosynthesis</keyword>
<keyword id="KW-0444">Lipid biosynthesis</keyword>
<keyword id="KW-0443">Lipid metabolism</keyword>
<keyword id="KW-0547">Nucleotide-binding</keyword>
<keyword id="KW-0808">Transferase</keyword>
<protein>
    <recommendedName>
        <fullName evidence="1">Tetraacyldisaccharide 4'-kinase</fullName>
        <ecNumber evidence="1">2.7.1.130</ecNumber>
    </recommendedName>
    <alternativeName>
        <fullName evidence="1">Lipid A 4'-kinase</fullName>
    </alternativeName>
</protein>
<organism>
    <name type="scientific">Chlorobium limicola (strain DSM 245 / NBRC 103803 / 6330)</name>
    <dbReference type="NCBI Taxonomy" id="290315"/>
    <lineage>
        <taxon>Bacteria</taxon>
        <taxon>Pseudomonadati</taxon>
        <taxon>Chlorobiota</taxon>
        <taxon>Chlorobiia</taxon>
        <taxon>Chlorobiales</taxon>
        <taxon>Chlorobiaceae</taxon>
        <taxon>Chlorobium/Pelodictyon group</taxon>
        <taxon>Chlorobium</taxon>
    </lineage>
</organism>
<accession>B3EG23</accession>
<proteinExistence type="inferred from homology"/>
<feature type="chain" id="PRO_1000191527" description="Tetraacyldisaccharide 4'-kinase">
    <location>
        <begin position="1"/>
        <end position="350"/>
    </location>
</feature>
<feature type="binding site" evidence="1">
    <location>
        <begin position="48"/>
        <end position="55"/>
    </location>
    <ligand>
        <name>ATP</name>
        <dbReference type="ChEBI" id="CHEBI:30616"/>
    </ligand>
</feature>
<reference key="1">
    <citation type="submission" date="2008-05" db="EMBL/GenBank/DDBJ databases">
        <title>Complete sequence of Chlorobium limicola DSM 245.</title>
        <authorList>
            <consortium name="US DOE Joint Genome Institute"/>
            <person name="Lucas S."/>
            <person name="Copeland A."/>
            <person name="Lapidus A."/>
            <person name="Glavina del Rio T."/>
            <person name="Dalin E."/>
            <person name="Tice H."/>
            <person name="Bruce D."/>
            <person name="Goodwin L."/>
            <person name="Pitluck S."/>
            <person name="Schmutz J."/>
            <person name="Larimer F."/>
            <person name="Land M."/>
            <person name="Hauser L."/>
            <person name="Kyrpides N."/>
            <person name="Ovchinnikova G."/>
            <person name="Zhao F."/>
            <person name="Li T."/>
            <person name="Liu Z."/>
            <person name="Overmann J."/>
            <person name="Bryant D.A."/>
            <person name="Richardson P."/>
        </authorList>
    </citation>
    <scope>NUCLEOTIDE SEQUENCE [LARGE SCALE GENOMIC DNA]</scope>
    <source>
        <strain>DSM 245 / NBRC 103803 / 6330</strain>
    </source>
</reference>
<name>LPXK_CHLL2</name>
<dbReference type="EC" id="2.7.1.130" evidence="1"/>
<dbReference type="EMBL" id="CP001097">
    <property type="protein sequence ID" value="ACD89556.1"/>
    <property type="molecule type" value="Genomic_DNA"/>
</dbReference>
<dbReference type="RefSeq" id="WP_012465437.1">
    <property type="nucleotide sequence ID" value="NC_010803.1"/>
</dbReference>
<dbReference type="SMR" id="B3EG23"/>
<dbReference type="STRING" id="290315.Clim_0463"/>
<dbReference type="KEGG" id="cli:Clim_0463"/>
<dbReference type="eggNOG" id="COG1663">
    <property type="taxonomic scope" value="Bacteria"/>
</dbReference>
<dbReference type="HOGENOM" id="CLU_038816_6_0_10"/>
<dbReference type="OrthoDB" id="9766423at2"/>
<dbReference type="UniPathway" id="UPA00359">
    <property type="reaction ID" value="UER00482"/>
</dbReference>
<dbReference type="Proteomes" id="UP000008841">
    <property type="component" value="Chromosome"/>
</dbReference>
<dbReference type="GO" id="GO:0005886">
    <property type="term" value="C:plasma membrane"/>
    <property type="evidence" value="ECO:0007669"/>
    <property type="project" value="TreeGrafter"/>
</dbReference>
<dbReference type="GO" id="GO:0005524">
    <property type="term" value="F:ATP binding"/>
    <property type="evidence" value="ECO:0007669"/>
    <property type="project" value="UniProtKB-UniRule"/>
</dbReference>
<dbReference type="GO" id="GO:0009029">
    <property type="term" value="F:tetraacyldisaccharide 4'-kinase activity"/>
    <property type="evidence" value="ECO:0007669"/>
    <property type="project" value="UniProtKB-UniRule"/>
</dbReference>
<dbReference type="GO" id="GO:0009245">
    <property type="term" value="P:lipid A biosynthetic process"/>
    <property type="evidence" value="ECO:0007669"/>
    <property type="project" value="UniProtKB-UniRule"/>
</dbReference>
<dbReference type="GO" id="GO:0009244">
    <property type="term" value="P:lipopolysaccharide core region biosynthetic process"/>
    <property type="evidence" value="ECO:0007669"/>
    <property type="project" value="TreeGrafter"/>
</dbReference>
<dbReference type="HAMAP" id="MF_00409">
    <property type="entry name" value="LpxK"/>
    <property type="match status" value="1"/>
</dbReference>
<dbReference type="InterPro" id="IPR003758">
    <property type="entry name" value="LpxK"/>
</dbReference>
<dbReference type="InterPro" id="IPR027417">
    <property type="entry name" value="P-loop_NTPase"/>
</dbReference>
<dbReference type="NCBIfam" id="TIGR00682">
    <property type="entry name" value="lpxK"/>
    <property type="match status" value="1"/>
</dbReference>
<dbReference type="PANTHER" id="PTHR42724">
    <property type="entry name" value="TETRAACYLDISACCHARIDE 4'-KINASE"/>
    <property type="match status" value="1"/>
</dbReference>
<dbReference type="PANTHER" id="PTHR42724:SF1">
    <property type="entry name" value="TETRAACYLDISACCHARIDE 4'-KINASE, MITOCHONDRIAL-RELATED"/>
    <property type="match status" value="1"/>
</dbReference>
<dbReference type="Pfam" id="PF02606">
    <property type="entry name" value="LpxK"/>
    <property type="match status" value="1"/>
</dbReference>
<dbReference type="SUPFAM" id="SSF52540">
    <property type="entry name" value="P-loop containing nucleoside triphosphate hydrolases"/>
    <property type="match status" value="1"/>
</dbReference>
<sequence length="350" mass="38464">MSNPLSPLLKPAAALYRTVVRMRNLGFEKKLFKTWKAPLPVVSIGNISAGGTGKTPLADWIINYCLSVGSEPALLSRGYGRTTKGVQLVSDGQRILLDSREAGDETSMLAARNPGIIVVVAEKRKEGVEFILKRFGTRMPSLIILDDAFQHRQIARDLDIVIINAAEPYCNARMLPEGRLREPLGNIRRAGLIVLNKITDRNAADAIACDLKKTGIPVVLAKTEAGELVPFGEDAGERNMNGIRAFAFAGIGSPEGFLGSLKEKGIQVEAHRFFRDHEPYSGDKLLPILLEAEKKGLSLVTTEKDYFRLLGEHELTATLSVLPCYYLKISTRFLEGEEILASMLNKVIFS</sequence>
<comment type="function">
    <text evidence="1">Transfers the gamma-phosphate of ATP to the 4'-position of a tetraacyldisaccharide 1-phosphate intermediate (termed DS-1-P) to form tetraacyldisaccharide 1,4'-bis-phosphate (lipid IVA).</text>
</comment>
<comment type="catalytic activity">
    <reaction evidence="1">
        <text>a lipid A disaccharide + ATP = a lipid IVA + ADP + H(+)</text>
        <dbReference type="Rhea" id="RHEA:67840"/>
        <dbReference type="ChEBI" id="CHEBI:15378"/>
        <dbReference type="ChEBI" id="CHEBI:30616"/>
        <dbReference type="ChEBI" id="CHEBI:176343"/>
        <dbReference type="ChEBI" id="CHEBI:176425"/>
        <dbReference type="ChEBI" id="CHEBI:456216"/>
        <dbReference type="EC" id="2.7.1.130"/>
    </reaction>
</comment>
<comment type="pathway">
    <text evidence="1">Glycolipid biosynthesis; lipid IV(A) biosynthesis; lipid IV(A) from (3R)-3-hydroxytetradecanoyl-[acyl-carrier-protein] and UDP-N-acetyl-alpha-D-glucosamine: step 6/6.</text>
</comment>
<comment type="similarity">
    <text evidence="1">Belongs to the LpxK family.</text>
</comment>
<gene>
    <name evidence="1" type="primary">lpxK</name>
    <name type="ordered locus">Clim_0463</name>
</gene>